<gene>
    <name type="primary">Spmip4</name>
    <name type="synonym">C7orf31</name>
</gene>
<organism>
    <name type="scientific">Mus musculus</name>
    <name type="common">Mouse</name>
    <dbReference type="NCBI Taxonomy" id="10090"/>
    <lineage>
        <taxon>Eukaryota</taxon>
        <taxon>Metazoa</taxon>
        <taxon>Chordata</taxon>
        <taxon>Craniata</taxon>
        <taxon>Vertebrata</taxon>
        <taxon>Euteleostomi</taxon>
        <taxon>Mammalia</taxon>
        <taxon>Eutheria</taxon>
        <taxon>Euarchontoglires</taxon>
        <taxon>Glires</taxon>
        <taxon>Rodentia</taxon>
        <taxon>Myomorpha</taxon>
        <taxon>Muroidea</taxon>
        <taxon>Muridae</taxon>
        <taxon>Murinae</taxon>
        <taxon>Mus</taxon>
        <taxon>Mus</taxon>
    </lineage>
</organism>
<feature type="chain" id="PRO_0000089588" description="Sperm-associated microtubule inner protein 4">
    <location>
        <begin position="1"/>
        <end position="588"/>
    </location>
</feature>
<feature type="modified residue" description="Phosphothreonine" evidence="2">
    <location>
        <position position="219"/>
    </location>
</feature>
<feature type="modified residue" description="Phosphoserine" evidence="2">
    <location>
        <position position="406"/>
    </location>
</feature>
<feature type="modified residue" description="Phosphoserine" evidence="2">
    <location>
        <position position="421"/>
    </location>
</feature>
<feature type="modified residue" description="Phosphoserine" evidence="2">
    <location>
        <position position="427"/>
    </location>
</feature>
<feature type="modified residue" description="Phosphotyrosine" evidence="2">
    <location>
        <position position="441"/>
    </location>
</feature>
<feature type="modified residue" description="Phosphoserine" evidence="2">
    <location>
        <position position="457"/>
    </location>
</feature>
<feature type="modified residue" description="Phosphoserine" evidence="2">
    <location>
        <position position="484"/>
    </location>
</feature>
<feature type="modified residue" description="Phosphoserine" evidence="2">
    <location>
        <position position="516"/>
    </location>
</feature>
<feature type="sequence conflict" description="In Ref. 3." evidence="6" ref="3">
    <original>Q</original>
    <variation>A</variation>
    <location>
        <position position="402"/>
    </location>
</feature>
<keyword id="KW-0966">Cell projection</keyword>
<keyword id="KW-0969">Cilium</keyword>
<keyword id="KW-0963">Cytoplasm</keyword>
<keyword id="KW-0206">Cytoskeleton</keyword>
<keyword id="KW-0282">Flagellum</keyword>
<keyword id="KW-0597">Phosphoprotein</keyword>
<keyword id="KW-1185">Reference proteome</keyword>
<sequence length="588" mass="67661">MEVIHGRPHCCRNLEGADILSNTFYSNGLHTPYETTIRPTASQARYQELREALPQCRLRWGADREYGGVLPVSLPEEHRPKCEPPRLMSKGHQHYGFGGEIWPKKLPIEQYYYMTQNKKSDVYGNDSLLPKPPNSAVKEICSPYPIEHPYHTHISRGSVFPTFTSPKDLYTGIKARTQQPFPPTVPTKACDTTILKTRGNPYRYELLDFPMDSKKKALTWPGQGVYYDFPKFVEKNKPVFYPKPPKTFAPNSSVNPWDTMSSAKDANIQRNLERSHWLTSYAHDFTGLGPMSPLELDDYHEKELAELTGQIGFDPQPQEKFHPALKTPRPLDGRIARLTQNQRPLEATVQIPPPCPDCTPRVLCAFHTFIPTSAEIMAMNNNLLSGITHKNQDVEEKIKEEQGLMSTCPLPTCYESKDLTSLYDVQSFPKITDTKKTDDLYWRQLEMKPLPISCSKSNHYIDYEPLKSAYRDPYAMCPNPVRLSKSNILQNKTDTADFTFDNFLSKPEFLGMNMESNEETRPLLDWIPRAGVPKHHSNLRNLRNTFSKSMAQKRLHNSIQEEQKDLRDKLQCGMRHQFFGYNGHHFYN</sequence>
<dbReference type="EMBL" id="AK014840">
    <property type="protein sequence ID" value="BAB29575.1"/>
    <property type="molecule type" value="mRNA"/>
</dbReference>
<dbReference type="EMBL" id="BC055110">
    <property type="protein sequence ID" value="AAH55110.1"/>
    <property type="molecule type" value="mRNA"/>
</dbReference>
<dbReference type="EMBL" id="AB045723">
    <property type="protein sequence ID" value="BAB97205.1"/>
    <property type="status" value="ALT_INIT"/>
    <property type="molecule type" value="mRNA"/>
</dbReference>
<dbReference type="CCDS" id="CCDS20132.1"/>
<dbReference type="RefSeq" id="NP_001404647.1">
    <property type="nucleotide sequence ID" value="NM_001417718.1"/>
</dbReference>
<dbReference type="RefSeq" id="NP_081840.1">
    <property type="nucleotide sequence ID" value="NM_027564.4"/>
</dbReference>
<dbReference type="RefSeq" id="XP_006506668.1">
    <property type="nucleotide sequence ID" value="XM_006506605.1"/>
</dbReference>
<dbReference type="RefSeq" id="XP_036008196.1">
    <property type="nucleotide sequence ID" value="XM_036152303.1"/>
</dbReference>
<dbReference type="FunCoup" id="Q9D5Y0">
    <property type="interactions" value="129"/>
</dbReference>
<dbReference type="STRING" id="10090.ENSMUSP00000031852"/>
<dbReference type="GlyGen" id="Q9D5Y0">
    <property type="glycosylation" value="1 site"/>
</dbReference>
<dbReference type="iPTMnet" id="Q9D5Y0"/>
<dbReference type="PhosphoSitePlus" id="Q9D5Y0"/>
<dbReference type="PaxDb" id="10090-ENSMUSP00000031852"/>
<dbReference type="Antibodypedia" id="12287">
    <property type="antibodies" value="52 antibodies from 18 providers"/>
</dbReference>
<dbReference type="DNASU" id="70821"/>
<dbReference type="Ensembl" id="ENSMUST00000031852.5">
    <property type="protein sequence ID" value="ENSMUSP00000031852.5"/>
    <property type="gene ID" value="ENSMUSG00000029828.5"/>
</dbReference>
<dbReference type="GeneID" id="70821"/>
<dbReference type="KEGG" id="mmu:70821"/>
<dbReference type="UCSC" id="uc009bxf.1">
    <property type="organism name" value="mouse"/>
</dbReference>
<dbReference type="AGR" id="MGI:1918071"/>
<dbReference type="CTD" id="136895"/>
<dbReference type="MGI" id="MGI:1918071">
    <property type="gene designation" value="Spmip4"/>
</dbReference>
<dbReference type="VEuPathDB" id="HostDB:ENSMUSG00000029828"/>
<dbReference type="eggNOG" id="ENOG502QUAM">
    <property type="taxonomic scope" value="Eukaryota"/>
</dbReference>
<dbReference type="GeneTree" id="ENSGT00390000015236"/>
<dbReference type="HOGENOM" id="CLU_038659_0_0_1"/>
<dbReference type="InParanoid" id="Q9D5Y0"/>
<dbReference type="OMA" id="DFPKCVE"/>
<dbReference type="OrthoDB" id="10040207at2759"/>
<dbReference type="PhylomeDB" id="Q9D5Y0"/>
<dbReference type="TreeFam" id="TF336164"/>
<dbReference type="BioGRID-ORCS" id="70821">
    <property type="hits" value="1 hit in 78 CRISPR screens"/>
</dbReference>
<dbReference type="PRO" id="PR:Q9D5Y0"/>
<dbReference type="Proteomes" id="UP000000589">
    <property type="component" value="Chromosome 6"/>
</dbReference>
<dbReference type="RNAct" id="Q9D5Y0">
    <property type="molecule type" value="protein"/>
</dbReference>
<dbReference type="Bgee" id="ENSMUSG00000029828">
    <property type="expression patterns" value="Expressed in seminiferous tubule of testis and 62 other cell types or tissues"/>
</dbReference>
<dbReference type="GO" id="GO:0005813">
    <property type="term" value="C:centrosome"/>
    <property type="evidence" value="ECO:0000250"/>
    <property type="project" value="UniProtKB"/>
</dbReference>
<dbReference type="GO" id="GO:0005737">
    <property type="term" value="C:cytoplasm"/>
    <property type="evidence" value="ECO:0007669"/>
    <property type="project" value="UniProtKB-KW"/>
</dbReference>
<dbReference type="GO" id="GO:0031514">
    <property type="term" value="C:motile cilium"/>
    <property type="evidence" value="ECO:0007669"/>
    <property type="project" value="UniProtKB-KW"/>
</dbReference>
<dbReference type="InterPro" id="IPR027886">
    <property type="entry name" value="SPMIP4"/>
</dbReference>
<dbReference type="PANTHER" id="PTHR31393">
    <property type="entry name" value="C5ORF31"/>
    <property type="match status" value="1"/>
</dbReference>
<dbReference type="PANTHER" id="PTHR31393:SF2">
    <property type="entry name" value="CHROMOSOME 7 OPEN READING FRAME 31"/>
    <property type="match status" value="1"/>
</dbReference>
<dbReference type="Pfam" id="PF15093">
    <property type="entry name" value="SPMIP4-like"/>
    <property type="match status" value="1"/>
</dbReference>
<comment type="function">
    <text evidence="1">Microtubule inner protein (MIP) part of the dynein-decorated doublet microtubules (DMTs) in flagellum axoneme. May serve to reinforce and thus stabilize the microtubule structure in the sperm flagella.</text>
</comment>
<comment type="subcellular location">
    <subcellularLocation>
        <location evidence="3">Cytoplasm</location>
        <location evidence="3">Cytoskeleton</location>
        <location evidence="3">Microtubule organizing center</location>
        <location evidence="3">Centrosome</location>
    </subcellularLocation>
    <subcellularLocation>
        <location evidence="1">Cytoplasm</location>
        <location evidence="1">Cytoskeleton</location>
        <location evidence="1">Flagellum axoneme</location>
    </subcellularLocation>
    <text evidence="1">Localizes to the A-tubules of DMTs.</text>
</comment>
<comment type="tissue specificity">
    <text evidence="4">Predominantly expressed in the testes.</text>
</comment>
<comment type="disruption phenotype">
    <text evidence="4">The testis size, weight and histology, spermatogenesis, and sperm morphology and motility are normal in homozygous knockout males.</text>
</comment>
<comment type="sequence caution" evidence="6">
    <conflict type="erroneous initiation">
        <sequence resource="EMBL-CDS" id="BAB97205"/>
    </conflict>
</comment>
<reference key="1">
    <citation type="journal article" date="2005" name="Science">
        <title>The transcriptional landscape of the mammalian genome.</title>
        <authorList>
            <person name="Carninci P."/>
            <person name="Kasukawa T."/>
            <person name="Katayama S."/>
            <person name="Gough J."/>
            <person name="Frith M.C."/>
            <person name="Maeda N."/>
            <person name="Oyama R."/>
            <person name="Ravasi T."/>
            <person name="Lenhard B."/>
            <person name="Wells C."/>
            <person name="Kodzius R."/>
            <person name="Shimokawa K."/>
            <person name="Bajic V.B."/>
            <person name="Brenner S.E."/>
            <person name="Batalov S."/>
            <person name="Forrest A.R."/>
            <person name="Zavolan M."/>
            <person name="Davis M.J."/>
            <person name="Wilming L.G."/>
            <person name="Aidinis V."/>
            <person name="Allen J.E."/>
            <person name="Ambesi-Impiombato A."/>
            <person name="Apweiler R."/>
            <person name="Aturaliya R.N."/>
            <person name="Bailey T.L."/>
            <person name="Bansal M."/>
            <person name="Baxter L."/>
            <person name="Beisel K.W."/>
            <person name="Bersano T."/>
            <person name="Bono H."/>
            <person name="Chalk A.M."/>
            <person name="Chiu K.P."/>
            <person name="Choudhary V."/>
            <person name="Christoffels A."/>
            <person name="Clutterbuck D.R."/>
            <person name="Crowe M.L."/>
            <person name="Dalla E."/>
            <person name="Dalrymple B.P."/>
            <person name="de Bono B."/>
            <person name="Della Gatta G."/>
            <person name="di Bernardo D."/>
            <person name="Down T."/>
            <person name="Engstrom P."/>
            <person name="Fagiolini M."/>
            <person name="Faulkner G."/>
            <person name="Fletcher C.F."/>
            <person name="Fukushima T."/>
            <person name="Furuno M."/>
            <person name="Futaki S."/>
            <person name="Gariboldi M."/>
            <person name="Georgii-Hemming P."/>
            <person name="Gingeras T.R."/>
            <person name="Gojobori T."/>
            <person name="Green R.E."/>
            <person name="Gustincich S."/>
            <person name="Harbers M."/>
            <person name="Hayashi Y."/>
            <person name="Hensch T.K."/>
            <person name="Hirokawa N."/>
            <person name="Hill D."/>
            <person name="Huminiecki L."/>
            <person name="Iacono M."/>
            <person name="Ikeo K."/>
            <person name="Iwama A."/>
            <person name="Ishikawa T."/>
            <person name="Jakt M."/>
            <person name="Kanapin A."/>
            <person name="Katoh M."/>
            <person name="Kawasawa Y."/>
            <person name="Kelso J."/>
            <person name="Kitamura H."/>
            <person name="Kitano H."/>
            <person name="Kollias G."/>
            <person name="Krishnan S.P."/>
            <person name="Kruger A."/>
            <person name="Kummerfeld S.K."/>
            <person name="Kurochkin I.V."/>
            <person name="Lareau L.F."/>
            <person name="Lazarevic D."/>
            <person name="Lipovich L."/>
            <person name="Liu J."/>
            <person name="Liuni S."/>
            <person name="McWilliam S."/>
            <person name="Madan Babu M."/>
            <person name="Madera M."/>
            <person name="Marchionni L."/>
            <person name="Matsuda H."/>
            <person name="Matsuzawa S."/>
            <person name="Miki H."/>
            <person name="Mignone F."/>
            <person name="Miyake S."/>
            <person name="Morris K."/>
            <person name="Mottagui-Tabar S."/>
            <person name="Mulder N."/>
            <person name="Nakano N."/>
            <person name="Nakauchi H."/>
            <person name="Ng P."/>
            <person name="Nilsson R."/>
            <person name="Nishiguchi S."/>
            <person name="Nishikawa S."/>
            <person name="Nori F."/>
            <person name="Ohara O."/>
            <person name="Okazaki Y."/>
            <person name="Orlando V."/>
            <person name="Pang K.C."/>
            <person name="Pavan W.J."/>
            <person name="Pavesi G."/>
            <person name="Pesole G."/>
            <person name="Petrovsky N."/>
            <person name="Piazza S."/>
            <person name="Reed J."/>
            <person name="Reid J.F."/>
            <person name="Ring B.Z."/>
            <person name="Ringwald M."/>
            <person name="Rost B."/>
            <person name="Ruan Y."/>
            <person name="Salzberg S.L."/>
            <person name="Sandelin A."/>
            <person name="Schneider C."/>
            <person name="Schoenbach C."/>
            <person name="Sekiguchi K."/>
            <person name="Semple C.A."/>
            <person name="Seno S."/>
            <person name="Sessa L."/>
            <person name="Sheng Y."/>
            <person name="Shibata Y."/>
            <person name="Shimada H."/>
            <person name="Shimada K."/>
            <person name="Silva D."/>
            <person name="Sinclair B."/>
            <person name="Sperling S."/>
            <person name="Stupka E."/>
            <person name="Sugiura K."/>
            <person name="Sultana R."/>
            <person name="Takenaka Y."/>
            <person name="Taki K."/>
            <person name="Tammoja K."/>
            <person name="Tan S.L."/>
            <person name="Tang S."/>
            <person name="Taylor M.S."/>
            <person name="Tegner J."/>
            <person name="Teichmann S.A."/>
            <person name="Ueda H.R."/>
            <person name="van Nimwegen E."/>
            <person name="Verardo R."/>
            <person name="Wei C.L."/>
            <person name="Yagi K."/>
            <person name="Yamanishi H."/>
            <person name="Zabarovsky E."/>
            <person name="Zhu S."/>
            <person name="Zimmer A."/>
            <person name="Hide W."/>
            <person name="Bult C."/>
            <person name="Grimmond S.M."/>
            <person name="Teasdale R.D."/>
            <person name="Liu E.T."/>
            <person name="Brusic V."/>
            <person name="Quackenbush J."/>
            <person name="Wahlestedt C."/>
            <person name="Mattick J.S."/>
            <person name="Hume D.A."/>
            <person name="Kai C."/>
            <person name="Sasaki D."/>
            <person name="Tomaru Y."/>
            <person name="Fukuda S."/>
            <person name="Kanamori-Katayama M."/>
            <person name="Suzuki M."/>
            <person name="Aoki J."/>
            <person name="Arakawa T."/>
            <person name="Iida J."/>
            <person name="Imamura K."/>
            <person name="Itoh M."/>
            <person name="Kato T."/>
            <person name="Kawaji H."/>
            <person name="Kawagashira N."/>
            <person name="Kawashima T."/>
            <person name="Kojima M."/>
            <person name="Kondo S."/>
            <person name="Konno H."/>
            <person name="Nakano K."/>
            <person name="Ninomiya N."/>
            <person name="Nishio T."/>
            <person name="Okada M."/>
            <person name="Plessy C."/>
            <person name="Shibata K."/>
            <person name="Shiraki T."/>
            <person name="Suzuki S."/>
            <person name="Tagami M."/>
            <person name="Waki K."/>
            <person name="Watahiki A."/>
            <person name="Okamura-Oho Y."/>
            <person name="Suzuki H."/>
            <person name="Kawai J."/>
            <person name="Hayashizaki Y."/>
        </authorList>
    </citation>
    <scope>NUCLEOTIDE SEQUENCE [LARGE SCALE MRNA]</scope>
    <source>
        <strain>C57BL/6J</strain>
        <tissue>Testis</tissue>
    </source>
</reference>
<reference key="2">
    <citation type="journal article" date="2004" name="Genome Res.">
        <title>The status, quality, and expansion of the NIH full-length cDNA project: the Mammalian Gene Collection (MGC).</title>
        <authorList>
            <consortium name="The MGC Project Team"/>
        </authorList>
    </citation>
    <scope>NUCLEOTIDE SEQUENCE [LARGE SCALE MRNA]</scope>
    <source>
        <tissue>Testis</tissue>
    </source>
</reference>
<reference key="3">
    <citation type="submission" date="2000-07" db="EMBL/GenBank/DDBJ databases">
        <title>Mus musculus TISP74 mRNA.</title>
        <authorList>
            <person name="Fujii T."/>
            <person name="Nishimune Y."/>
            <person name="Nojima H."/>
        </authorList>
    </citation>
    <scope>NUCLEOTIDE SEQUENCE [MRNA] OF 402-588</scope>
    <source>
        <tissue>Testis</tissue>
    </source>
</reference>
<reference key="4">
    <citation type="journal article" date="2020" name="Biol. Reprod.">
        <title>CRISPR/Cas9-based genome editing in mice uncovers 13 testis- or epididymis-enriched genes individually dispensable for male reproduction.</title>
        <authorList>
            <person name="Sun J."/>
            <person name="Lu Y."/>
            <person name="Nozawa K."/>
            <person name="Xu Z."/>
            <person name="Morohoshi A."/>
            <person name="Castaneda J.M."/>
            <person name="Noda T."/>
            <person name="Miyata H."/>
            <person name="Abbasi F."/>
            <person name="Shawki H.H."/>
            <person name="Takahashi S."/>
            <person name="Devlin D.J."/>
            <person name="Yu Z."/>
            <person name="Matzuk R.M."/>
            <person name="Garcia T.X."/>
            <person name="Matzuk M.M."/>
            <person name="Ikawa M."/>
        </authorList>
    </citation>
    <scope>TISSUE SPECIFICITY</scope>
    <scope>DISRUPTION PHENOTYPE</scope>
</reference>
<name>SMIP4_MOUSE</name>
<accession>Q9D5Y0</accession>
<accession>Q8K4U1</accession>
<protein>
    <recommendedName>
        <fullName>Sperm-associated microtubule inner protein 4</fullName>
    </recommendedName>
    <alternativeName>
        <fullName evidence="5">Protein TISP74</fullName>
    </alternativeName>
</protein>
<evidence type="ECO:0000250" key="1">
    <source>
        <dbReference type="UniProtKB" id="E1B9R1"/>
    </source>
</evidence>
<evidence type="ECO:0000250" key="2">
    <source>
        <dbReference type="UniProtKB" id="Q6AYM0"/>
    </source>
</evidence>
<evidence type="ECO:0000250" key="3">
    <source>
        <dbReference type="UniProtKB" id="Q8N865"/>
    </source>
</evidence>
<evidence type="ECO:0000269" key="4">
    <source>
    </source>
</evidence>
<evidence type="ECO:0000303" key="5">
    <source ref="3"/>
</evidence>
<evidence type="ECO:0000305" key="6"/>
<proteinExistence type="evidence at transcript level"/>